<proteinExistence type="inferred from homology"/>
<dbReference type="EC" id="2.4.2.7" evidence="1"/>
<dbReference type="EMBL" id="AE005176">
    <property type="protein sequence ID" value="AAK04731.1"/>
    <property type="status" value="ALT_INIT"/>
    <property type="molecule type" value="Genomic_DNA"/>
</dbReference>
<dbReference type="PIR" id="A86704">
    <property type="entry name" value="A86704"/>
</dbReference>
<dbReference type="RefSeq" id="NP_266789.1">
    <property type="nucleotide sequence ID" value="NC_002662.1"/>
</dbReference>
<dbReference type="RefSeq" id="WP_012897343.1">
    <property type="nucleotide sequence ID" value="NC_002662.1"/>
</dbReference>
<dbReference type="SMR" id="Q9CHT5"/>
<dbReference type="PaxDb" id="272623-L22735"/>
<dbReference type="EnsemblBacteria" id="AAK04731">
    <property type="protein sequence ID" value="AAK04731"/>
    <property type="gene ID" value="L22735"/>
</dbReference>
<dbReference type="KEGG" id="lla:L22735"/>
<dbReference type="PATRIC" id="fig|272623.7.peg.677"/>
<dbReference type="eggNOG" id="COG0503">
    <property type="taxonomic scope" value="Bacteria"/>
</dbReference>
<dbReference type="HOGENOM" id="CLU_063339_3_0_9"/>
<dbReference type="OrthoDB" id="9803963at2"/>
<dbReference type="UniPathway" id="UPA00588">
    <property type="reaction ID" value="UER00646"/>
</dbReference>
<dbReference type="Proteomes" id="UP000002196">
    <property type="component" value="Chromosome"/>
</dbReference>
<dbReference type="GO" id="GO:0005737">
    <property type="term" value="C:cytoplasm"/>
    <property type="evidence" value="ECO:0007669"/>
    <property type="project" value="UniProtKB-SubCell"/>
</dbReference>
<dbReference type="GO" id="GO:0002055">
    <property type="term" value="F:adenine binding"/>
    <property type="evidence" value="ECO:0007669"/>
    <property type="project" value="TreeGrafter"/>
</dbReference>
<dbReference type="GO" id="GO:0003999">
    <property type="term" value="F:adenine phosphoribosyltransferase activity"/>
    <property type="evidence" value="ECO:0007669"/>
    <property type="project" value="UniProtKB-UniRule"/>
</dbReference>
<dbReference type="GO" id="GO:0016208">
    <property type="term" value="F:AMP binding"/>
    <property type="evidence" value="ECO:0007669"/>
    <property type="project" value="TreeGrafter"/>
</dbReference>
<dbReference type="GO" id="GO:0006168">
    <property type="term" value="P:adenine salvage"/>
    <property type="evidence" value="ECO:0007669"/>
    <property type="project" value="InterPro"/>
</dbReference>
<dbReference type="GO" id="GO:0044209">
    <property type="term" value="P:AMP salvage"/>
    <property type="evidence" value="ECO:0007669"/>
    <property type="project" value="UniProtKB-UniRule"/>
</dbReference>
<dbReference type="GO" id="GO:0006166">
    <property type="term" value="P:purine ribonucleoside salvage"/>
    <property type="evidence" value="ECO:0007669"/>
    <property type="project" value="UniProtKB-KW"/>
</dbReference>
<dbReference type="CDD" id="cd06223">
    <property type="entry name" value="PRTases_typeI"/>
    <property type="match status" value="1"/>
</dbReference>
<dbReference type="FunFam" id="3.40.50.2020:FF:000004">
    <property type="entry name" value="Adenine phosphoribosyltransferase"/>
    <property type="match status" value="1"/>
</dbReference>
<dbReference type="Gene3D" id="3.40.50.2020">
    <property type="match status" value="1"/>
</dbReference>
<dbReference type="HAMAP" id="MF_00004">
    <property type="entry name" value="Aden_phosphoribosyltr"/>
    <property type="match status" value="1"/>
</dbReference>
<dbReference type="InterPro" id="IPR005764">
    <property type="entry name" value="Ade_phspho_trans"/>
</dbReference>
<dbReference type="InterPro" id="IPR000836">
    <property type="entry name" value="PRibTrfase_dom"/>
</dbReference>
<dbReference type="InterPro" id="IPR029057">
    <property type="entry name" value="PRTase-like"/>
</dbReference>
<dbReference type="InterPro" id="IPR050054">
    <property type="entry name" value="UPRTase/APRTase"/>
</dbReference>
<dbReference type="NCBIfam" id="TIGR01090">
    <property type="entry name" value="apt"/>
    <property type="match status" value="1"/>
</dbReference>
<dbReference type="NCBIfam" id="NF002633">
    <property type="entry name" value="PRK02304.1-2"/>
    <property type="match status" value="1"/>
</dbReference>
<dbReference type="NCBIfam" id="NF002634">
    <property type="entry name" value="PRK02304.1-3"/>
    <property type="match status" value="1"/>
</dbReference>
<dbReference type="NCBIfam" id="NF002636">
    <property type="entry name" value="PRK02304.1-5"/>
    <property type="match status" value="1"/>
</dbReference>
<dbReference type="PANTHER" id="PTHR32315">
    <property type="entry name" value="ADENINE PHOSPHORIBOSYLTRANSFERASE"/>
    <property type="match status" value="1"/>
</dbReference>
<dbReference type="PANTHER" id="PTHR32315:SF3">
    <property type="entry name" value="ADENINE PHOSPHORIBOSYLTRANSFERASE"/>
    <property type="match status" value="1"/>
</dbReference>
<dbReference type="Pfam" id="PF00156">
    <property type="entry name" value="Pribosyltran"/>
    <property type="match status" value="1"/>
</dbReference>
<dbReference type="SUPFAM" id="SSF53271">
    <property type="entry name" value="PRTase-like"/>
    <property type="match status" value="1"/>
</dbReference>
<dbReference type="PROSITE" id="PS00103">
    <property type="entry name" value="PUR_PYR_PR_TRANSFER"/>
    <property type="match status" value="1"/>
</dbReference>
<gene>
    <name evidence="1" type="primary">apt</name>
    <name type="ordered locus">LL0633</name>
    <name type="ORF">L22735</name>
</gene>
<comment type="function">
    <text evidence="1">Catalyzes a salvage reaction resulting in the formation of AMP, that is energically less costly than de novo synthesis.</text>
</comment>
<comment type="catalytic activity">
    <reaction evidence="1">
        <text>AMP + diphosphate = 5-phospho-alpha-D-ribose 1-diphosphate + adenine</text>
        <dbReference type="Rhea" id="RHEA:16609"/>
        <dbReference type="ChEBI" id="CHEBI:16708"/>
        <dbReference type="ChEBI" id="CHEBI:33019"/>
        <dbReference type="ChEBI" id="CHEBI:58017"/>
        <dbReference type="ChEBI" id="CHEBI:456215"/>
        <dbReference type="EC" id="2.4.2.7"/>
    </reaction>
</comment>
<comment type="pathway">
    <text evidence="1">Purine metabolism; AMP biosynthesis via salvage pathway; AMP from adenine: step 1/1.</text>
</comment>
<comment type="subunit">
    <text evidence="1">Homodimer.</text>
</comment>
<comment type="subcellular location">
    <subcellularLocation>
        <location evidence="1">Cytoplasm</location>
    </subcellularLocation>
</comment>
<comment type="similarity">
    <text evidence="1">Belongs to the purine/pyrimidine phosphoribosyltransferase family.</text>
</comment>
<comment type="sequence caution" evidence="2">
    <conflict type="erroneous initiation">
        <sequence resource="EMBL-CDS" id="AAK04731"/>
    </conflict>
</comment>
<name>APT_LACLA</name>
<reference key="1">
    <citation type="journal article" date="2001" name="Genome Res.">
        <title>The complete genome sequence of the lactic acid bacterium Lactococcus lactis ssp. lactis IL1403.</title>
        <authorList>
            <person name="Bolotin A."/>
            <person name="Wincker P."/>
            <person name="Mauger S."/>
            <person name="Jaillon O."/>
            <person name="Malarme K."/>
            <person name="Weissenbach J."/>
            <person name="Ehrlich S.D."/>
            <person name="Sorokin A."/>
        </authorList>
    </citation>
    <scope>NUCLEOTIDE SEQUENCE [LARGE SCALE GENOMIC DNA]</scope>
    <source>
        <strain>IL1403</strain>
    </source>
</reference>
<protein>
    <recommendedName>
        <fullName evidence="1">Adenine phosphoribosyltransferase</fullName>
        <shortName evidence="1">APRT</shortName>
        <ecNumber evidence="1">2.4.2.7</ecNumber>
    </recommendedName>
</protein>
<sequence>MELKDYIATIENYPKEGVVFRDISPLMADGNAYNYAATEIVQYARDKEIDMVVGPEARGFIIGCPVAFALGVGFAPVRKPGKLPREVIEATYEKEYGTDTLTMHSDSIKPGQRVLIVDDLLATGGTIAATIELVEKMGGIVVGCAFLIELDELKGREKIGDYDYKVLMHY</sequence>
<organism>
    <name type="scientific">Lactococcus lactis subsp. lactis (strain IL1403)</name>
    <name type="common">Streptococcus lactis</name>
    <dbReference type="NCBI Taxonomy" id="272623"/>
    <lineage>
        <taxon>Bacteria</taxon>
        <taxon>Bacillati</taxon>
        <taxon>Bacillota</taxon>
        <taxon>Bacilli</taxon>
        <taxon>Lactobacillales</taxon>
        <taxon>Streptococcaceae</taxon>
        <taxon>Lactococcus</taxon>
    </lineage>
</organism>
<accession>Q9CHT5</accession>
<feature type="chain" id="PRO_0000149399" description="Adenine phosphoribosyltransferase">
    <location>
        <begin position="1"/>
        <end position="170"/>
    </location>
</feature>
<keyword id="KW-0963">Cytoplasm</keyword>
<keyword id="KW-0328">Glycosyltransferase</keyword>
<keyword id="KW-0660">Purine salvage</keyword>
<keyword id="KW-1185">Reference proteome</keyword>
<keyword id="KW-0808">Transferase</keyword>
<evidence type="ECO:0000255" key="1">
    <source>
        <dbReference type="HAMAP-Rule" id="MF_00004"/>
    </source>
</evidence>
<evidence type="ECO:0000305" key="2"/>